<evidence type="ECO:0000250" key="1">
    <source>
        <dbReference type="UniProtKB" id="P22309"/>
    </source>
</evidence>
<evidence type="ECO:0000255" key="2"/>
<evidence type="ECO:0000269" key="3">
    <source>
    </source>
</evidence>
<evidence type="ECO:0000305" key="4"/>
<evidence type="ECO:0000312" key="5">
    <source>
        <dbReference type="MGI" id="MGI:98898"/>
    </source>
</evidence>
<gene>
    <name evidence="5" type="primary">Ugt1a1</name>
    <name type="synonym">Ugt1</name>
</gene>
<organism>
    <name type="scientific">Mus musculus</name>
    <name type="common">Mouse</name>
    <dbReference type="NCBI Taxonomy" id="10090"/>
    <lineage>
        <taxon>Eukaryota</taxon>
        <taxon>Metazoa</taxon>
        <taxon>Chordata</taxon>
        <taxon>Craniata</taxon>
        <taxon>Vertebrata</taxon>
        <taxon>Euteleostomi</taxon>
        <taxon>Mammalia</taxon>
        <taxon>Eutheria</taxon>
        <taxon>Euarchontoglires</taxon>
        <taxon>Glires</taxon>
        <taxon>Rodentia</taxon>
        <taxon>Myomorpha</taxon>
        <taxon>Muroidea</taxon>
        <taxon>Muridae</taxon>
        <taxon>Murinae</taxon>
        <taxon>Mus</taxon>
        <taxon>Mus</taxon>
    </lineage>
</organism>
<proteinExistence type="evidence at protein level"/>
<comment type="function">
    <text evidence="1">UDP-glucuronosyltransferase (UGT) that catalyzes phase II biotransformation reactions in which lipophilic substrates are conjugated with glucuronic acid to increase the metabolite's water solubility, thereby facilitating excretion into either the urine or bile. Essential for the elimination and detoxification of drugs, xenobiotics and endogenous compounds. Catalyzes the glucuronidation of endogenous estrogen hormones such as estradiol, estrone and estriol. Involved in the glucuronidation of bilirubin, a degradation product occurring in the normal catabolic pathway that breaks down heme in vertebrates. Involved in the glucuronidation of arachidonic acid (AA) and AA-derived eicosanoids including 15-HETE, 20-HETE, PGB1 and F2-isoprostane (8-iso-PGF2alpha). Involved in the glucuronidation of the phytochemical ferulic acid at the phenolic or the carboxylic acid group. Also catalyzes the glucuronidation the isoflavones genistein, daidzein, glycitein, formononetin, biochanin A and prunetin, which are phytoestrogens with anticancer and cardiovascular properties. Involved in the glucuronidation of the AGTR1 angiotensin receptor antagonist losartan, a drug which can inhibit the effect of angiotensin II. Involved in the biotransformation of 7-ethyl-10-hydroxycamptothecin (SN-38), the pharmacologically active metabolite of the anticancer drug irinotecan.</text>
</comment>
<comment type="catalytic activity">
    <reaction evidence="1">
        <text>glucuronate acceptor + UDP-alpha-D-glucuronate = acceptor beta-D-glucuronoside + UDP + H(+)</text>
        <dbReference type="Rhea" id="RHEA:21032"/>
        <dbReference type="ChEBI" id="CHEBI:15378"/>
        <dbReference type="ChEBI" id="CHEBI:58052"/>
        <dbReference type="ChEBI" id="CHEBI:58223"/>
        <dbReference type="ChEBI" id="CHEBI:132367"/>
        <dbReference type="ChEBI" id="CHEBI:132368"/>
        <dbReference type="EC" id="2.4.1.17"/>
    </reaction>
    <physiologicalReaction direction="left-to-right" evidence="1">
        <dbReference type="Rhea" id="RHEA:21033"/>
    </physiologicalReaction>
</comment>
<comment type="catalytic activity">
    <reaction evidence="1">
        <text>17beta-estradiol + UDP-alpha-D-glucuronate = 17beta-estradiol 3-O-(beta-D-glucuronate) + UDP + H(+)</text>
        <dbReference type="Rhea" id="RHEA:52460"/>
        <dbReference type="ChEBI" id="CHEBI:15378"/>
        <dbReference type="ChEBI" id="CHEBI:16469"/>
        <dbReference type="ChEBI" id="CHEBI:58052"/>
        <dbReference type="ChEBI" id="CHEBI:58223"/>
        <dbReference type="ChEBI" id="CHEBI:136641"/>
    </reaction>
    <physiologicalReaction direction="left-to-right" evidence="1">
        <dbReference type="Rhea" id="RHEA:52461"/>
    </physiologicalReaction>
</comment>
<comment type="catalytic activity">
    <reaction evidence="1">
        <text>2-hydroxyestrone + UDP-alpha-D-glucuronate = 2-hydroxyestrone 3-O-(beta-D-glucuronate) + UDP + H(+)</text>
        <dbReference type="Rhea" id="RHEA:53048"/>
        <dbReference type="ChEBI" id="CHEBI:1156"/>
        <dbReference type="ChEBI" id="CHEBI:15378"/>
        <dbReference type="ChEBI" id="CHEBI:58052"/>
        <dbReference type="ChEBI" id="CHEBI:58223"/>
        <dbReference type="ChEBI" id="CHEBI:136967"/>
    </reaction>
    <physiologicalReaction direction="left-to-right" evidence="1">
        <dbReference type="Rhea" id="RHEA:53049"/>
    </physiologicalReaction>
</comment>
<comment type="catalytic activity">
    <reaction evidence="1">
        <text>2-hydroxy-17beta-estradiol + UDP-alpha-D-glucuronate = 2-hydroxy-17beta-estradiol 3-O-(beta-D-glucuronate) + UDP + H(+)</text>
        <dbReference type="Rhea" id="RHEA:53004"/>
        <dbReference type="ChEBI" id="CHEBI:15378"/>
        <dbReference type="ChEBI" id="CHEBI:28744"/>
        <dbReference type="ChEBI" id="CHEBI:58052"/>
        <dbReference type="ChEBI" id="CHEBI:58223"/>
        <dbReference type="ChEBI" id="CHEBI:136931"/>
    </reaction>
    <physiologicalReaction direction="left-to-right" evidence="1">
        <dbReference type="Rhea" id="RHEA:53005"/>
    </physiologicalReaction>
</comment>
<comment type="catalytic activity">
    <reaction evidence="1">
        <text>2-methoxy-17beta-estradiol + UDP-alpha-D-glucuronate = 2-methoxy-17beta-estradiol 3-O-(beta-D-glucuronate) + UDP + H(+)</text>
        <dbReference type="Rhea" id="RHEA:53072"/>
        <dbReference type="ChEBI" id="CHEBI:15378"/>
        <dbReference type="ChEBI" id="CHEBI:28955"/>
        <dbReference type="ChEBI" id="CHEBI:58052"/>
        <dbReference type="ChEBI" id="CHEBI:58223"/>
        <dbReference type="ChEBI" id="CHEBI:136974"/>
    </reaction>
    <physiologicalReaction direction="left-to-right" evidence="1">
        <dbReference type="Rhea" id="RHEA:53073"/>
    </physiologicalReaction>
</comment>
<comment type="catalytic activity">
    <reaction evidence="1">
        <text>17alpha-estradiol + UDP-alpha-D-glucuronate = 17alpha-estradiol 3-O-(beta-D-glucuronate) + UDP + H(+)</text>
        <dbReference type="Rhea" id="RHEA:52868"/>
        <dbReference type="ChEBI" id="CHEBI:15378"/>
        <dbReference type="ChEBI" id="CHEBI:17160"/>
        <dbReference type="ChEBI" id="CHEBI:57529"/>
        <dbReference type="ChEBI" id="CHEBI:58052"/>
        <dbReference type="ChEBI" id="CHEBI:58223"/>
    </reaction>
    <physiologicalReaction direction="left-to-right" evidence="1">
        <dbReference type="Rhea" id="RHEA:52869"/>
    </physiologicalReaction>
</comment>
<comment type="catalytic activity">
    <reaction evidence="1">
        <text>16beta,17beta-estriol + UDP-alpha-D-glucuronate = 16beta,17beta-estriol 16-O-(beta-D-glucuronate) + UDP + H(+)</text>
        <dbReference type="Rhea" id="RHEA:52880"/>
        <dbReference type="ChEBI" id="CHEBI:15378"/>
        <dbReference type="ChEBI" id="CHEBI:58052"/>
        <dbReference type="ChEBI" id="CHEBI:58223"/>
        <dbReference type="ChEBI" id="CHEBI:87620"/>
        <dbReference type="ChEBI" id="CHEBI:136886"/>
    </reaction>
    <physiologicalReaction direction="left-to-right" evidence="1">
        <dbReference type="Rhea" id="RHEA:52881"/>
    </physiologicalReaction>
</comment>
<comment type="catalytic activity">
    <reaction evidence="1">
        <text>losartan + UDP-alpha-D-glucuronate = losartan-2-N-beta-D-glucuronide + UDP</text>
        <dbReference type="Rhea" id="RHEA:63720"/>
        <dbReference type="ChEBI" id="CHEBI:58052"/>
        <dbReference type="ChEBI" id="CHEBI:58223"/>
        <dbReference type="ChEBI" id="CHEBI:149504"/>
        <dbReference type="ChEBI" id="CHEBI:149507"/>
    </reaction>
    <physiologicalReaction direction="left-to-right" evidence="1">
        <dbReference type="Rhea" id="RHEA:63721"/>
    </physiologicalReaction>
</comment>
<comment type="catalytic activity">
    <reaction evidence="1">
        <text>prunetin + UDP-alpha-D-glucuronate = prunetin-4'-O-beta-D-glucuronide + UDP</text>
        <dbReference type="Rhea" id="RHEA:63588"/>
        <dbReference type="ChEBI" id="CHEBI:58052"/>
        <dbReference type="ChEBI" id="CHEBI:58223"/>
        <dbReference type="ChEBI" id="CHEBI:147403"/>
        <dbReference type="ChEBI" id="CHEBI:147404"/>
    </reaction>
    <physiologicalReaction direction="left-to-right" evidence="1">
        <dbReference type="Rhea" id="RHEA:63589"/>
    </physiologicalReaction>
</comment>
<comment type="catalytic activity">
    <reaction evidence="1">
        <text>SN-38 + UDP-alpha-D-glucuronate = SN-38 O-beta-D-glucuronide + UDP + H(+)</text>
        <dbReference type="Rhea" id="RHEA:63696"/>
        <dbReference type="ChEBI" id="CHEBI:8988"/>
        <dbReference type="ChEBI" id="CHEBI:15378"/>
        <dbReference type="ChEBI" id="CHEBI:58052"/>
        <dbReference type="ChEBI" id="CHEBI:58223"/>
        <dbReference type="ChEBI" id="CHEBI:149482"/>
    </reaction>
    <physiologicalReaction direction="left-to-right" evidence="1">
        <dbReference type="Rhea" id="RHEA:63697"/>
    </physiologicalReaction>
</comment>
<comment type="catalytic activity">
    <reaction evidence="1">
        <text>(4Z,15Z)-bilirubin IXalpha + UDP-alpha-D-glucuronate = (4Z,15Z)-bilirubin IXalpha C12-beta-D-glucuronoside + UDP</text>
        <dbReference type="Rhea" id="RHEA:75099"/>
        <dbReference type="ChEBI" id="CHEBI:57977"/>
        <dbReference type="ChEBI" id="CHEBI:58052"/>
        <dbReference type="ChEBI" id="CHEBI:58223"/>
        <dbReference type="ChEBI" id="CHEBI:229705"/>
    </reaction>
    <physiologicalReaction direction="left-to-right" evidence="1">
        <dbReference type="Rhea" id="RHEA:75100"/>
    </physiologicalReaction>
</comment>
<comment type="catalytic activity">
    <reaction evidence="1">
        <text>(4Z,15Z)-bilirubin IXalpha + UDP-alpha-D-glucuronate = (4Z,15Z)-bilirubin IXalpha C8-beta-D-glucuronoside + UDP</text>
        <dbReference type="Rhea" id="RHEA:79067"/>
        <dbReference type="ChEBI" id="CHEBI:57977"/>
        <dbReference type="ChEBI" id="CHEBI:58052"/>
        <dbReference type="ChEBI" id="CHEBI:58223"/>
        <dbReference type="ChEBI" id="CHEBI:229704"/>
    </reaction>
    <physiologicalReaction direction="left-to-right" evidence="1">
        <dbReference type="Rhea" id="RHEA:79068"/>
    </physiologicalReaction>
</comment>
<comment type="catalytic activity">
    <reaction evidence="1">
        <text>(4Z,15Z)-bilirubin IXalpha C8-beta-D-glucuronoside + UDP-alpha-D-glucuronate = (4Z,15Z)-bilirubin IXalpha C8,C12-beta-D-bisglucuronoside + UDP</text>
        <dbReference type="Rhea" id="RHEA:79071"/>
        <dbReference type="ChEBI" id="CHEBI:58052"/>
        <dbReference type="ChEBI" id="CHEBI:58223"/>
        <dbReference type="ChEBI" id="CHEBI:229704"/>
        <dbReference type="ChEBI" id="CHEBI:229706"/>
    </reaction>
    <physiologicalReaction direction="left-to-right" evidence="1">
        <dbReference type="Rhea" id="RHEA:79072"/>
    </physiologicalReaction>
</comment>
<comment type="catalytic activity">
    <reaction evidence="1">
        <text>(4Z,15Z)-bilirubin IXalpha C12-beta-D-glucuronoside + UDP-alpha-D-glucuronate = (4Z,15Z)-bilirubin IXalpha C8,C12-beta-D-bisglucuronoside + UDP</text>
        <dbReference type="Rhea" id="RHEA:79075"/>
        <dbReference type="ChEBI" id="CHEBI:58052"/>
        <dbReference type="ChEBI" id="CHEBI:58223"/>
        <dbReference type="ChEBI" id="CHEBI:229705"/>
        <dbReference type="ChEBI" id="CHEBI:229706"/>
    </reaction>
    <physiologicalReaction direction="left-to-right" evidence="1">
        <dbReference type="Rhea" id="RHEA:79076"/>
    </physiologicalReaction>
</comment>
<comment type="catalytic activity">
    <reaction evidence="1">
        <text>8-iso-prostaglandin F2alpha + UDP-alpha-D-glucuronate = 8-iso-prostaglandin F2alpha-glucuronide + UDP + H(+)</text>
        <dbReference type="Rhea" id="RHEA:79907"/>
        <dbReference type="ChEBI" id="CHEBI:15378"/>
        <dbReference type="ChEBI" id="CHEBI:58052"/>
        <dbReference type="ChEBI" id="CHEBI:58223"/>
        <dbReference type="ChEBI" id="CHEBI:77768"/>
        <dbReference type="ChEBI" id="CHEBI:229786"/>
    </reaction>
    <physiologicalReaction direction="left-to-right" evidence="1">
        <dbReference type="Rhea" id="RHEA:79908"/>
    </physiologicalReaction>
</comment>
<comment type="catalytic activity">
    <reaction evidence="1">
        <text>(5Z,8Z,11Z,14Z)-eicosatetraenoate + UDP-alpha-D-glucuronate = O-[(5Z),(8Z),(11Z),(14Z)-eicosatetraenoyl]-beta-D-glucuronate + UDP</text>
        <dbReference type="Rhea" id="RHEA:79915"/>
        <dbReference type="ChEBI" id="CHEBI:32395"/>
        <dbReference type="ChEBI" id="CHEBI:58052"/>
        <dbReference type="ChEBI" id="CHEBI:58223"/>
        <dbReference type="ChEBI" id="CHEBI:231327"/>
    </reaction>
    <physiologicalReaction direction="left-to-right" evidence="1">
        <dbReference type="Rhea" id="RHEA:79916"/>
    </physiologicalReaction>
</comment>
<comment type="catalytic activity">
    <reaction evidence="1">
        <text>15-hydroxy-(5Z,8Z,11Z,13E)-eicosatetraenoate + UDP-alpha-D-glucuronate = 15-O-(beta-D-glucuronosyl)-(5Z,8Z,11Z,14Z)-eicosatetraenoate + UDP + H(+)</text>
        <dbReference type="Rhea" id="RHEA:79919"/>
        <dbReference type="ChEBI" id="CHEBI:15378"/>
        <dbReference type="ChEBI" id="CHEBI:58052"/>
        <dbReference type="ChEBI" id="CHEBI:58223"/>
        <dbReference type="ChEBI" id="CHEBI:78832"/>
        <dbReference type="ChEBI" id="CHEBI:231329"/>
    </reaction>
    <physiologicalReaction direction="left-to-right" evidence="1">
        <dbReference type="Rhea" id="RHEA:79920"/>
    </physiologicalReaction>
</comment>
<comment type="catalytic activity">
    <reaction evidence="1">
        <text>20-hydroxy-(5Z,8Z,11Z,14Z)-eicosatetraenoate + UDP-alpha-D-glucuronate = 20-O-(beta-D-glucuronosyl)-(5Z,8Z,11Z,14Z)-eicosatetraenoate + UDP + H(+)</text>
        <dbReference type="Rhea" id="RHEA:79927"/>
        <dbReference type="ChEBI" id="CHEBI:15378"/>
        <dbReference type="ChEBI" id="CHEBI:58052"/>
        <dbReference type="ChEBI" id="CHEBI:58223"/>
        <dbReference type="ChEBI" id="CHEBI:76624"/>
        <dbReference type="ChEBI" id="CHEBI:231328"/>
    </reaction>
    <physiologicalReaction direction="left-to-right" evidence="1">
        <dbReference type="Rhea" id="RHEA:79928"/>
    </physiologicalReaction>
</comment>
<comment type="catalytic activity">
    <reaction evidence="1">
        <text>prostaglandin B1 + UDP-alpha-D-glucuronate = 15-O-(beta-D-glucuronosyl)-prostaglandin B1 + UDP + H(+)</text>
        <dbReference type="Rhea" id="RHEA:79935"/>
        <dbReference type="ChEBI" id="CHEBI:15378"/>
        <dbReference type="ChEBI" id="CHEBI:58052"/>
        <dbReference type="ChEBI" id="CHEBI:58223"/>
        <dbReference type="ChEBI" id="CHEBI:133393"/>
        <dbReference type="ChEBI" id="CHEBI:231330"/>
    </reaction>
    <physiologicalReaction direction="left-to-right" evidence="1">
        <dbReference type="Rhea" id="RHEA:79936"/>
    </physiologicalReaction>
</comment>
<comment type="catalytic activity">
    <reaction evidence="1">
        <text>(E)-ferulate + UDP-alpha-D-glucuronate = (E)-4-O-(beta-D-glucuronosyl)-ferulate + UDP + H(+)</text>
        <dbReference type="Rhea" id="RHEA:79951"/>
        <dbReference type="ChEBI" id="CHEBI:15378"/>
        <dbReference type="ChEBI" id="CHEBI:29749"/>
        <dbReference type="ChEBI" id="CHEBI:58052"/>
        <dbReference type="ChEBI" id="CHEBI:58223"/>
        <dbReference type="ChEBI" id="CHEBI:231331"/>
    </reaction>
    <physiologicalReaction direction="left-to-right" evidence="1">
        <dbReference type="Rhea" id="RHEA:79952"/>
    </physiologicalReaction>
</comment>
<comment type="catalytic activity">
    <reaction evidence="1">
        <text>(E)-ferulate + UDP-alpha-D-glucuronate = (E)-ferulic acid beta-D-glucuronate ester + UDP</text>
        <dbReference type="Rhea" id="RHEA:79955"/>
        <dbReference type="ChEBI" id="CHEBI:29749"/>
        <dbReference type="ChEBI" id="CHEBI:58052"/>
        <dbReference type="ChEBI" id="CHEBI:58223"/>
        <dbReference type="ChEBI" id="CHEBI:231332"/>
    </reaction>
    <physiologicalReaction direction="left-to-right" evidence="1">
        <dbReference type="Rhea" id="RHEA:79956"/>
    </physiologicalReaction>
</comment>
<comment type="subunit">
    <text evidence="1">Homodimers. Homooligomer. Interacts with UGT1A3, UGT1A4, UGT1A6, UGT1A7, UGT1A8, UGT1A9 and UGT1A10 to form heterodimers.</text>
</comment>
<comment type="subcellular location">
    <subcellularLocation>
        <location evidence="1">Endoplasmic reticulum membrane</location>
        <topology evidence="2">Single-pass membrane protein</topology>
    </subcellularLocation>
</comment>
<comment type="alternative products">
    <event type="alternative splicing"/>
    <isoform>
        <id>Q63886-1</id>
        <name>1</name>
        <sequence type="displayed"/>
    </isoform>
    <text evidence="1">UGT1A1 is one of the isoforms produced at the UGT1A complex locus. The UGT1A complex locus produces different isoforms based on alternative use of promoters, first exons and terminal exons.</text>
</comment>
<comment type="tissue specificity">
    <text evidence="3">Highly expressed in liver and at lower levels in colon, kidney, stomach and intestine.</text>
</comment>
<comment type="induction">
    <text>By dioxin.</text>
</comment>
<comment type="similarity">
    <text evidence="4">Belongs to the UDP-glycosyltransferase family.</text>
</comment>
<keyword id="KW-0025">Alternative splicing</keyword>
<keyword id="KW-0256">Endoplasmic reticulum</keyword>
<keyword id="KW-0325">Glycoprotein</keyword>
<keyword id="KW-0328">Glycosyltransferase</keyword>
<keyword id="KW-0443">Lipid metabolism</keyword>
<keyword id="KW-0472">Membrane</keyword>
<keyword id="KW-1185">Reference proteome</keyword>
<keyword id="KW-0732">Signal</keyword>
<keyword id="KW-0808">Transferase</keyword>
<keyword id="KW-0812">Transmembrane</keyword>
<keyword id="KW-1133">Transmembrane helix</keyword>
<reference key="1">
    <citation type="journal article" date="1993" name="Pharm. Res.">
        <title>Molecular cloning of two cDNAs encoding the mouse bilirubin/phenol family of UDP-glucuronosyltransferases (mUGTBr/p).</title>
        <authorList>
            <person name="Kong A.N."/>
            <person name="Ma M."/>
            <person name="Tao D."/>
            <person name="Yang L."/>
        </authorList>
    </citation>
    <scope>NUCLEOTIDE SEQUENCE [MRNA]</scope>
</reference>
<reference key="2">
    <citation type="journal article" date="2004" name="Genome Res.">
        <title>Multiple variable first exons: a mechanism for cell- and tissue-specific gene regulation.</title>
        <authorList>
            <person name="Zhang T."/>
            <person name="Haws P."/>
            <person name="Wu Q."/>
        </authorList>
    </citation>
    <scope>NUCLEOTIDE SEQUENCE [MRNA]</scope>
    <scope>TISSUE SPECIFICITY</scope>
    <source>
        <tissue>Colon</tissue>
    </source>
</reference>
<reference key="3">
    <citation type="journal article" date="2004" name="Genome Res.">
        <title>The status, quality, and expansion of the NIH full-length cDNA project: the Mammalian Gene Collection (MGC).</title>
        <authorList>
            <consortium name="The MGC Project Team"/>
        </authorList>
    </citation>
    <scope>NUCLEOTIDE SEQUENCE [LARGE SCALE MRNA]</scope>
    <source>
        <strain>FVB/N</strain>
        <tissue>Liver</tissue>
    </source>
</reference>
<reference key="4">
    <citation type="journal article" date="2010" name="Cell">
        <title>A tissue-specific atlas of mouse protein phosphorylation and expression.</title>
        <authorList>
            <person name="Huttlin E.L."/>
            <person name="Jedrychowski M.P."/>
            <person name="Elias J.E."/>
            <person name="Goswami T."/>
            <person name="Rad R."/>
            <person name="Beausoleil S.A."/>
            <person name="Villen J."/>
            <person name="Haas W."/>
            <person name="Sowa M.E."/>
            <person name="Gygi S.P."/>
        </authorList>
    </citation>
    <scope>IDENTIFICATION BY MASS SPECTROMETRY [LARGE SCALE ANALYSIS]</scope>
    <source>
        <tissue>Liver</tissue>
    </source>
</reference>
<dbReference type="EC" id="2.4.1.17" evidence="1"/>
<dbReference type="EMBL" id="S64760">
    <property type="protein sequence ID" value="AAB26033.2"/>
    <property type="molecule type" value="mRNA"/>
</dbReference>
<dbReference type="EMBL" id="AY227194">
    <property type="protein sequence ID" value="AAP48593.1"/>
    <property type="molecule type" value="mRNA"/>
</dbReference>
<dbReference type="EMBL" id="BC093516">
    <property type="protein sequence ID" value="AAH93516.1"/>
    <property type="molecule type" value="mRNA"/>
</dbReference>
<dbReference type="CCDS" id="CCDS15143.1">
    <molecule id="Q63886-1"/>
</dbReference>
<dbReference type="RefSeq" id="NP_964007.2">
    <molecule id="Q63886-1"/>
    <property type="nucleotide sequence ID" value="NM_201645.2"/>
</dbReference>
<dbReference type="SMR" id="Q63886"/>
<dbReference type="FunCoup" id="Q63886">
    <property type="interactions" value="628"/>
</dbReference>
<dbReference type="STRING" id="10090.ENSMUSP00000072803"/>
<dbReference type="ChEMBL" id="CHEMBL4523337"/>
<dbReference type="CAZy" id="GT1">
    <property type="family name" value="Glycosyltransferase Family 1"/>
</dbReference>
<dbReference type="GlyCosmos" id="Q63886">
    <property type="glycosylation" value="3 sites, No reported glycans"/>
</dbReference>
<dbReference type="GlyGen" id="Q63886">
    <property type="glycosylation" value="4 sites, 2 N-linked glycans (2 sites), 1 O-linked glycan (1 site)"/>
</dbReference>
<dbReference type="iPTMnet" id="Q63886"/>
<dbReference type="PhosphoSitePlus" id="Q63886"/>
<dbReference type="SwissPalm" id="Q63886"/>
<dbReference type="jPOST" id="Q63886"/>
<dbReference type="PaxDb" id="10090-ENSMUSP00000072803"/>
<dbReference type="PeptideAtlas" id="Q63886"/>
<dbReference type="ProteomicsDB" id="298192">
    <molecule id="Q63886-1"/>
</dbReference>
<dbReference type="Pumba" id="Q63886"/>
<dbReference type="Antibodypedia" id="35061">
    <property type="antibodies" value="228 antibodies from 27 providers"/>
</dbReference>
<dbReference type="DNASU" id="394436"/>
<dbReference type="Ensembl" id="ENSMUST00000073049.7">
    <molecule id="Q63886-1"/>
    <property type="protein sequence ID" value="ENSMUSP00000072803.7"/>
    <property type="gene ID" value="ENSMUSG00000089960.2"/>
</dbReference>
<dbReference type="GeneID" id="394436"/>
<dbReference type="KEGG" id="mmu:394436"/>
<dbReference type="UCSC" id="uc007byk.1">
    <molecule id="Q63886-1"/>
    <property type="organism name" value="mouse"/>
</dbReference>
<dbReference type="AGR" id="MGI:98898"/>
<dbReference type="CTD" id="54658"/>
<dbReference type="MGI" id="MGI:98898">
    <property type="gene designation" value="Ugt1a1"/>
</dbReference>
<dbReference type="VEuPathDB" id="HostDB:ENSMUSG00000089960"/>
<dbReference type="eggNOG" id="KOG1192">
    <property type="taxonomic scope" value="Eukaryota"/>
</dbReference>
<dbReference type="GeneTree" id="ENSGT00940000159677"/>
<dbReference type="HOGENOM" id="CLU_012949_3_0_1"/>
<dbReference type="InParanoid" id="Q63886"/>
<dbReference type="OMA" id="SFRTEIY"/>
<dbReference type="OrthoDB" id="5835829at2759"/>
<dbReference type="PhylomeDB" id="Q63886"/>
<dbReference type="TreeFam" id="TF315472"/>
<dbReference type="BRENDA" id="2.4.1.17">
    <property type="organism ID" value="3474"/>
</dbReference>
<dbReference type="Reactome" id="R-MMU-156588">
    <property type="pathway name" value="Glucuronidation"/>
</dbReference>
<dbReference type="Reactome" id="R-MMU-189483">
    <property type="pathway name" value="Heme degradation"/>
</dbReference>
<dbReference type="Reactome" id="R-MMU-9749641">
    <property type="pathway name" value="Aspirin ADME"/>
</dbReference>
<dbReference type="Reactome" id="R-MMU-9753281">
    <property type="pathway name" value="Paracetamol ADME"/>
</dbReference>
<dbReference type="BioGRID-ORCS" id="394436">
    <property type="hits" value="15 hits in 81 CRISPR screens"/>
</dbReference>
<dbReference type="PRO" id="PR:Q63886"/>
<dbReference type="Proteomes" id="UP000000589">
    <property type="component" value="Chromosome 1"/>
</dbReference>
<dbReference type="RNAct" id="Q63886">
    <property type="molecule type" value="protein"/>
</dbReference>
<dbReference type="Bgee" id="ENSMUSG00000089960">
    <property type="expression patterns" value="Expressed in duodenum and 47 other cell types or tissues"/>
</dbReference>
<dbReference type="GO" id="GO:0034663">
    <property type="term" value="C:endoplasmic reticulum chaperone complex"/>
    <property type="evidence" value="ECO:0000314"/>
    <property type="project" value="ParkinsonsUK-UCL"/>
</dbReference>
<dbReference type="GO" id="GO:0005789">
    <property type="term" value="C:endoplasmic reticulum membrane"/>
    <property type="evidence" value="ECO:0007669"/>
    <property type="project" value="UniProtKB-SubCell"/>
</dbReference>
<dbReference type="GO" id="GO:0005886">
    <property type="term" value="C:plasma membrane"/>
    <property type="evidence" value="ECO:0000314"/>
    <property type="project" value="MGI"/>
</dbReference>
<dbReference type="GO" id="GO:0019899">
    <property type="term" value="F:enzyme binding"/>
    <property type="evidence" value="ECO:0007669"/>
    <property type="project" value="Ensembl"/>
</dbReference>
<dbReference type="GO" id="GO:0004857">
    <property type="term" value="F:enzyme inhibitor activity"/>
    <property type="evidence" value="ECO:0007669"/>
    <property type="project" value="Ensembl"/>
</dbReference>
<dbReference type="GO" id="GO:0015020">
    <property type="term" value="F:glucuronosyltransferase activity"/>
    <property type="evidence" value="ECO:0000250"/>
    <property type="project" value="UniProtKB"/>
</dbReference>
<dbReference type="GO" id="GO:0042803">
    <property type="term" value="F:protein homodimerization activity"/>
    <property type="evidence" value="ECO:0007669"/>
    <property type="project" value="Ensembl"/>
</dbReference>
<dbReference type="GO" id="GO:0001972">
    <property type="term" value="F:retinoic acid binding"/>
    <property type="evidence" value="ECO:0007669"/>
    <property type="project" value="Ensembl"/>
</dbReference>
<dbReference type="GO" id="GO:0005496">
    <property type="term" value="F:steroid binding"/>
    <property type="evidence" value="ECO:0007669"/>
    <property type="project" value="Ensembl"/>
</dbReference>
<dbReference type="GO" id="GO:0008210">
    <property type="term" value="P:estrogen metabolic process"/>
    <property type="evidence" value="ECO:0000250"/>
    <property type="project" value="UniProtKB"/>
</dbReference>
<dbReference type="GO" id="GO:0051552">
    <property type="term" value="P:flavone metabolic process"/>
    <property type="evidence" value="ECO:0007669"/>
    <property type="project" value="Ensembl"/>
</dbReference>
<dbReference type="GO" id="GO:0006805">
    <property type="term" value="P:xenobiotic metabolic process"/>
    <property type="evidence" value="ECO:0007669"/>
    <property type="project" value="Ensembl"/>
</dbReference>
<dbReference type="CDD" id="cd03784">
    <property type="entry name" value="GT1_Gtf-like"/>
    <property type="match status" value="1"/>
</dbReference>
<dbReference type="FunFam" id="3.40.50.2000:FF:000001">
    <property type="entry name" value="UDP-glucuronosyltransferase"/>
    <property type="match status" value="1"/>
</dbReference>
<dbReference type="FunFam" id="3.40.50.2000:FF:000066">
    <property type="entry name" value="UDP-glucuronosyltransferase 1-1"/>
    <property type="match status" value="1"/>
</dbReference>
<dbReference type="Gene3D" id="3.40.50.2000">
    <property type="entry name" value="Glycogen Phosphorylase B"/>
    <property type="match status" value="2"/>
</dbReference>
<dbReference type="InterPro" id="IPR050271">
    <property type="entry name" value="UDP-glycosyltransferase"/>
</dbReference>
<dbReference type="InterPro" id="IPR002213">
    <property type="entry name" value="UDP_glucos_trans"/>
</dbReference>
<dbReference type="InterPro" id="IPR035595">
    <property type="entry name" value="UDP_glycos_trans_CS"/>
</dbReference>
<dbReference type="PANTHER" id="PTHR48043">
    <property type="entry name" value="EG:EG0003.4 PROTEIN-RELATED"/>
    <property type="match status" value="1"/>
</dbReference>
<dbReference type="PANTHER" id="PTHR48043:SF161">
    <property type="entry name" value="UDP GLUCURONOSYLTRANSFERASE FAMILY 1 MEMBER A1"/>
    <property type="match status" value="1"/>
</dbReference>
<dbReference type="Pfam" id="PF00201">
    <property type="entry name" value="UDPGT"/>
    <property type="match status" value="1"/>
</dbReference>
<dbReference type="SUPFAM" id="SSF53756">
    <property type="entry name" value="UDP-Glycosyltransferase/glycogen phosphorylase"/>
    <property type="match status" value="1"/>
</dbReference>
<dbReference type="PROSITE" id="PS00375">
    <property type="entry name" value="UDPGT"/>
    <property type="match status" value="1"/>
</dbReference>
<protein>
    <recommendedName>
        <fullName evidence="4">UDP-glucuronosyltransferase 1A1</fullName>
        <shortName evidence="1">UGT1A1</shortName>
        <ecNumber evidence="1">2.4.1.17</ecNumber>
    </recommendedName>
    <alternativeName>
        <fullName>UDP-glucuronosyltransferase 1-1</fullName>
        <shortName>UDPGT 1-1</shortName>
        <shortName>UGT1*1</shortName>
        <shortName>UGT1-01</shortName>
        <shortName>UGT1.1</shortName>
    </alternativeName>
    <alternativeName>
        <fullName>UGTBR1</fullName>
    </alternativeName>
</protein>
<sequence>MTVVCWSSRLLLLLPYLLLCVFGPSASHAGRLLVFPMDGSHWLSMLGVIQQLQQKGHEVVVIAPEASIHIKEGSFYTLRKFPVPFQKENVTATLVELGRTAFNQDSFLLRVVKIYMKVKRDSSMLLAGCSHLLHNAEFMASLEESHFDALLTDPFLPCGSIVAQYLTVPTVYFLNKLPCSLDSEATQCPVPLSYVPKSLSFNSDRMNFLQRVKNVLLAVSENFMCRVVYSPYGSLATEILQKEVTVQDLLSPASIWLMRSDFVKDYPRPIMPNMVFIGGINCLQKKPLSQEFEAYVNASGEHGIVVFSLGSMVSEIPEKKAMEIAEALGRIPQTVLWRYTGTRPSNLAKNTILVKWLPQNDLLGHPKTRAFITHSGSHGIYEGICNGVPMVMMPLFGDQMDNAKRMETRGAGVTLNVLEMTADDLENALKTVINNKSYKENIMRLSSLHKDRPIEPLDLAVFWVEYVMRHKGAPHLRPAAHDLTWYQYHSLDVIGFLLAIVLTVVFIVFKCCAYGCRKCFGGKGRVKKSHKSKTH</sequence>
<feature type="signal peptide" evidence="2">
    <location>
        <begin position="1"/>
        <end position="29"/>
    </location>
</feature>
<feature type="chain" id="PRO_0000036010" description="UDP-glucuronosyltransferase 1A1">
    <location>
        <begin position="30"/>
        <end position="535"/>
    </location>
</feature>
<feature type="transmembrane region" description="Helical" evidence="2">
    <location>
        <begin position="493"/>
        <end position="509"/>
    </location>
</feature>
<feature type="glycosylation site" description="N-linked (GlcNAc...) asparagine" evidence="2">
    <location>
        <position position="89"/>
    </location>
</feature>
<feature type="glycosylation site" description="N-linked (GlcNAc...) asparagine" evidence="2">
    <location>
        <position position="297"/>
    </location>
</feature>
<feature type="glycosylation site" description="N-linked (GlcNAc...) asparagine" evidence="2">
    <location>
        <position position="435"/>
    </location>
</feature>
<feature type="sequence conflict" description="In Ref. 1; AAB26033." evidence="4" ref="1">
    <original>S</original>
    <variation>Y</variation>
    <location>
        <position position="25"/>
    </location>
</feature>
<feature type="sequence conflict" description="In Ref. 1; AAB26033." evidence="4" ref="1">
    <original>L</original>
    <variation>I</variation>
    <location>
        <position position="363"/>
    </location>
</feature>
<feature type="sequence conflict" description="In Ref. 2; AAP48593." evidence="4" ref="2">
    <original>H</original>
    <variation>R</variation>
    <location>
        <position position="378"/>
    </location>
</feature>
<accession>Q63886</accession>
<accession>Q561M6</accession>
<accession>Q6XL50</accession>
<name>UD11_MOUSE</name>